<organism>
    <name type="scientific">Brucella abortus (strain S19)</name>
    <dbReference type="NCBI Taxonomy" id="430066"/>
    <lineage>
        <taxon>Bacteria</taxon>
        <taxon>Pseudomonadati</taxon>
        <taxon>Pseudomonadota</taxon>
        <taxon>Alphaproteobacteria</taxon>
        <taxon>Hyphomicrobiales</taxon>
        <taxon>Brucellaceae</taxon>
        <taxon>Brucella/Ochrobactrum group</taxon>
        <taxon>Brucella</taxon>
    </lineage>
</organism>
<keyword id="KW-0012">Acyltransferase</keyword>
<keyword id="KW-0028">Amino-acid biosynthesis</keyword>
<keyword id="KW-0963">Cytoplasm</keyword>
<keyword id="KW-0486">Methionine biosynthesis</keyword>
<keyword id="KW-0808">Transferase</keyword>
<name>METAA_BRUA1</name>
<gene>
    <name evidence="1" type="primary">metAA</name>
    <name type="ordered locus">BAbS19_II06980</name>
</gene>
<sequence>MPIKIPDDLPATSVLEAEGVMVMREADAVRQDIRPLRIGLLNLMPNKVTTETQIARLLGATPLQVELTLVRMTNHVARHTPADHMLSFYCPWEEVNDQRFDGFVITGAPVERLPFEEVTYWDEMRRVFDWTQSHVHRTLNICWAAQAAVYHFHGMKKYDLPAKASGVFRQRSLVPASPYLRGFSDDFAIPVSRWTEVRKSDIPADSGLKVLVDSTETGLCLLDDPRHRSLHMFNHVEYDTTSLADEYFRDIQVQPEAKVPVNYFPGDDAKRPPENRWRSHAHLLFGNWINEMYQSTPYDIERIGKV</sequence>
<proteinExistence type="inferred from homology"/>
<accession>B2SBF6</accession>
<feature type="chain" id="PRO_1000115175" description="Homoserine O-acetyltransferase">
    <location>
        <begin position="1"/>
        <end position="306"/>
    </location>
</feature>
<feature type="active site" description="Acyl-thioester intermediate" evidence="1">
    <location>
        <position position="142"/>
    </location>
</feature>
<feature type="active site" description="Proton acceptor" evidence="1">
    <location>
        <position position="235"/>
    </location>
</feature>
<feature type="active site" evidence="1">
    <location>
        <position position="237"/>
    </location>
</feature>
<feature type="binding site" evidence="1">
    <location>
        <position position="163"/>
    </location>
    <ligand>
        <name>substrate</name>
    </ligand>
</feature>
<feature type="binding site" evidence="1">
    <location>
        <position position="192"/>
    </location>
    <ligand>
        <name>substrate</name>
    </ligand>
</feature>
<feature type="binding site" evidence="1">
    <location>
        <position position="249"/>
    </location>
    <ligand>
        <name>substrate</name>
    </ligand>
</feature>
<feature type="site" description="Important for acyl-CoA specificity" evidence="1">
    <location>
        <position position="111"/>
    </location>
</feature>
<feature type="site" description="Important for substrate specificity" evidence="1">
    <location>
        <position position="192"/>
    </location>
</feature>
<evidence type="ECO:0000255" key="1">
    <source>
        <dbReference type="HAMAP-Rule" id="MF_00295"/>
    </source>
</evidence>
<comment type="function">
    <text evidence="1">Transfers an acetyl group from acetyl-CoA to L-homoserine, forming acetyl-L-homoserine.</text>
</comment>
<comment type="catalytic activity">
    <reaction evidence="1">
        <text>L-homoserine + acetyl-CoA = O-acetyl-L-homoserine + CoA</text>
        <dbReference type="Rhea" id="RHEA:13701"/>
        <dbReference type="ChEBI" id="CHEBI:57287"/>
        <dbReference type="ChEBI" id="CHEBI:57288"/>
        <dbReference type="ChEBI" id="CHEBI:57476"/>
        <dbReference type="ChEBI" id="CHEBI:57716"/>
        <dbReference type="EC" id="2.3.1.31"/>
    </reaction>
</comment>
<comment type="pathway">
    <text evidence="1">Amino-acid biosynthesis; L-methionine biosynthesis via de novo pathway; O-acetyl-L-homoserine from L-homoserine: step 1/1.</text>
</comment>
<comment type="subcellular location">
    <subcellularLocation>
        <location evidence="1">Cytoplasm</location>
    </subcellularLocation>
</comment>
<comment type="similarity">
    <text evidence="1">Belongs to the MetA family.</text>
</comment>
<reference key="1">
    <citation type="journal article" date="2008" name="PLoS ONE">
        <title>Genome sequence of Brucella abortus vaccine strain S19 compared to virulent strains yields candidate virulence genes.</title>
        <authorList>
            <person name="Crasta O.R."/>
            <person name="Folkerts O."/>
            <person name="Fei Z."/>
            <person name="Mane S.P."/>
            <person name="Evans C."/>
            <person name="Martino-Catt S."/>
            <person name="Bricker B."/>
            <person name="Yu G."/>
            <person name="Du L."/>
            <person name="Sobral B.W."/>
        </authorList>
    </citation>
    <scope>NUCLEOTIDE SEQUENCE [LARGE SCALE GENOMIC DNA]</scope>
    <source>
        <strain>S19</strain>
    </source>
</reference>
<protein>
    <recommendedName>
        <fullName evidence="1">Homoserine O-acetyltransferase</fullName>
        <shortName evidence="1">HAT</shortName>
        <ecNumber evidence="1">2.3.1.31</ecNumber>
    </recommendedName>
    <alternativeName>
        <fullName evidence="1">Homoserine transacetylase</fullName>
        <shortName evidence="1">HTA</shortName>
    </alternativeName>
</protein>
<dbReference type="EC" id="2.3.1.31" evidence="1"/>
<dbReference type="EMBL" id="CP000888">
    <property type="protein sequence ID" value="ACD74193.1"/>
    <property type="molecule type" value="Genomic_DNA"/>
</dbReference>
<dbReference type="SMR" id="B2SBF6"/>
<dbReference type="KEGG" id="bmc:BAbS19_II06980"/>
<dbReference type="HOGENOM" id="CLU_057851_0_1_5"/>
<dbReference type="UniPathway" id="UPA00051">
    <property type="reaction ID" value="UER00074"/>
</dbReference>
<dbReference type="Proteomes" id="UP000002565">
    <property type="component" value="Chromosome 2"/>
</dbReference>
<dbReference type="GO" id="GO:0005737">
    <property type="term" value="C:cytoplasm"/>
    <property type="evidence" value="ECO:0007669"/>
    <property type="project" value="UniProtKB-SubCell"/>
</dbReference>
<dbReference type="GO" id="GO:0004414">
    <property type="term" value="F:homoserine O-acetyltransferase activity"/>
    <property type="evidence" value="ECO:0007669"/>
    <property type="project" value="UniProtKB-EC"/>
</dbReference>
<dbReference type="GO" id="GO:0008899">
    <property type="term" value="F:homoserine O-succinyltransferase activity"/>
    <property type="evidence" value="ECO:0007669"/>
    <property type="project" value="UniProtKB-UniRule"/>
</dbReference>
<dbReference type="GO" id="GO:0019281">
    <property type="term" value="P:L-methionine biosynthetic process from homoserine via O-succinyl-L-homoserine and cystathionine"/>
    <property type="evidence" value="ECO:0007669"/>
    <property type="project" value="InterPro"/>
</dbReference>
<dbReference type="CDD" id="cd03131">
    <property type="entry name" value="GATase1_HTS"/>
    <property type="match status" value="1"/>
</dbReference>
<dbReference type="Gene3D" id="3.40.50.880">
    <property type="match status" value="1"/>
</dbReference>
<dbReference type="HAMAP" id="MF_00295">
    <property type="entry name" value="MetA_acyltransf"/>
    <property type="match status" value="1"/>
</dbReference>
<dbReference type="InterPro" id="IPR029062">
    <property type="entry name" value="Class_I_gatase-like"/>
</dbReference>
<dbReference type="InterPro" id="IPR005697">
    <property type="entry name" value="HST_MetA"/>
</dbReference>
<dbReference type="InterPro" id="IPR033752">
    <property type="entry name" value="MetA_family"/>
</dbReference>
<dbReference type="NCBIfam" id="TIGR01001">
    <property type="entry name" value="metA"/>
    <property type="match status" value="1"/>
</dbReference>
<dbReference type="PANTHER" id="PTHR20919">
    <property type="entry name" value="HOMOSERINE O-SUCCINYLTRANSFERASE"/>
    <property type="match status" value="1"/>
</dbReference>
<dbReference type="PANTHER" id="PTHR20919:SF0">
    <property type="entry name" value="HOMOSERINE O-SUCCINYLTRANSFERASE"/>
    <property type="match status" value="1"/>
</dbReference>
<dbReference type="Pfam" id="PF04204">
    <property type="entry name" value="HTS"/>
    <property type="match status" value="1"/>
</dbReference>
<dbReference type="PIRSF" id="PIRSF000450">
    <property type="entry name" value="H_ser_succinyltr"/>
    <property type="match status" value="1"/>
</dbReference>
<dbReference type="SUPFAM" id="SSF52317">
    <property type="entry name" value="Class I glutamine amidotransferase-like"/>
    <property type="match status" value="1"/>
</dbReference>